<name>PDP1_PONAB</name>
<gene>
    <name type="primary">PDP1</name>
    <name type="synonym">PPM2C</name>
</gene>
<sequence>MPAPTQLFFPLIRNCELSRIYGTACYCHHKHLCCSSSYIPQSRLRYTPHPAYATFCRPKENWWHYTQGRRYASTPQKFYLTPPQVNSILKANEYSFKVPEFDGKNVSSILGFDSNQLPANAPIEDRRSAATCLQTRGMLLGVFDGHAGCACSQAVSERLFYYIAVSLLPHETLLEIENAVESGRALLPILQWHKHPNDYFSKEASKLYFNSLRTYWQELIDLNTGESTDIDVKEALINAFKRLDNDISLEAQVGDPNSFLNYLVLRVAFSGATACVAHVDGVDLHVANTGDSRAMLGVQEEDGSWSALTLSNDHNAQNERELERLKLEHPKSEAKSVVKQDRLLGLLMPFRAFGDVKFKWSIDLQKRVIESGPDQLNDNEYTKFIPPNYHTPPYLTAEPEVTYHRLRPQDKFLVLATDGLWETMHRQDVVRIVGEYLTGMHHQQPIAVGGYKVTLGQMHGLLTERRTKMSSVFEDQNAATHLIRHAVGNNEFGTVDHERLSKMLSLPEELARMYRDDITIIVVQFNSHVVGAYQNQE</sequence>
<proteinExistence type="evidence at transcript level"/>
<protein>
    <recommendedName>
        <fullName>[Pyruvate dehydrogenase [acetyl-transferring]]-phosphatase 1, mitochondrial</fullName>
        <shortName>PDP 1</shortName>
        <ecNumber evidence="2">3.1.3.43</ecNumber>
    </recommendedName>
    <alternativeName>
        <fullName>Protein phosphatase 2C</fullName>
    </alternativeName>
    <alternativeName>
        <fullName>Pyruvate dehydrogenase phosphatase catalytic subunit 1</fullName>
        <shortName>PDPC 1</shortName>
    </alternativeName>
</protein>
<dbReference type="EC" id="3.1.3.43" evidence="2"/>
<dbReference type="EMBL" id="CR859169">
    <property type="protein sequence ID" value="CAH91358.1"/>
    <property type="molecule type" value="mRNA"/>
</dbReference>
<dbReference type="EMBL" id="CR859524">
    <property type="protein sequence ID" value="CAH91692.1"/>
    <property type="molecule type" value="mRNA"/>
</dbReference>
<dbReference type="EMBL" id="CR861198">
    <property type="protein sequence ID" value="CAH93269.1"/>
    <property type="status" value="ALT_INIT"/>
    <property type="molecule type" value="mRNA"/>
</dbReference>
<dbReference type="EMBL" id="CR861387">
    <property type="protein sequence ID" value="CAH93445.1"/>
    <property type="status" value="ALT_SEQ"/>
    <property type="molecule type" value="mRNA"/>
</dbReference>
<dbReference type="RefSeq" id="NP_001127016.1">
    <property type="nucleotide sequence ID" value="NM_001133544.1"/>
</dbReference>
<dbReference type="RefSeq" id="NP_001128828.1">
    <property type="nucleotide sequence ID" value="NM_001135356.1"/>
</dbReference>
<dbReference type="RefSeq" id="XP_024106419.1">
    <property type="nucleotide sequence ID" value="XM_024250651.3"/>
</dbReference>
<dbReference type="SMR" id="Q5RA52"/>
<dbReference type="FunCoup" id="Q5RA52">
    <property type="interactions" value="2153"/>
</dbReference>
<dbReference type="STRING" id="9601.ENSPPYP00000021027"/>
<dbReference type="Ensembl" id="ENSPPYT00000051421.1">
    <property type="protein sequence ID" value="ENSPPYP00000045426.1"/>
    <property type="gene ID" value="ENSPPYG00000018747.3"/>
</dbReference>
<dbReference type="GeneID" id="100174041"/>
<dbReference type="KEGG" id="pon:100174041"/>
<dbReference type="CTD" id="54704"/>
<dbReference type="eggNOG" id="KOG0700">
    <property type="taxonomic scope" value="Eukaryota"/>
</dbReference>
<dbReference type="GeneTree" id="ENSGT00940000156368"/>
<dbReference type="HOGENOM" id="CLU_021928_0_0_1"/>
<dbReference type="InParanoid" id="Q5RA52"/>
<dbReference type="OMA" id="DVRTPPY"/>
<dbReference type="OrthoDB" id="420076at2759"/>
<dbReference type="TreeFam" id="TF313505"/>
<dbReference type="Proteomes" id="UP000001595">
    <property type="component" value="Chromosome 8"/>
</dbReference>
<dbReference type="GO" id="GO:0005739">
    <property type="term" value="C:mitochondrion"/>
    <property type="evidence" value="ECO:0000250"/>
    <property type="project" value="UniProtKB"/>
</dbReference>
<dbReference type="GO" id="GO:0004741">
    <property type="term" value="F:[pyruvate dehydrogenase (acetyl-transferring)]-phosphatase activity"/>
    <property type="evidence" value="ECO:0000250"/>
    <property type="project" value="UniProtKB"/>
</dbReference>
<dbReference type="GO" id="GO:0046872">
    <property type="term" value="F:metal ion binding"/>
    <property type="evidence" value="ECO:0007669"/>
    <property type="project" value="UniProtKB-KW"/>
</dbReference>
<dbReference type="CDD" id="cd00143">
    <property type="entry name" value="PP2Cc"/>
    <property type="match status" value="1"/>
</dbReference>
<dbReference type="Gene3D" id="3.60.40.10">
    <property type="entry name" value="PPM-type phosphatase domain"/>
    <property type="match status" value="1"/>
</dbReference>
<dbReference type="InterPro" id="IPR015655">
    <property type="entry name" value="PP2C"/>
</dbReference>
<dbReference type="InterPro" id="IPR000222">
    <property type="entry name" value="PP2C_BS"/>
</dbReference>
<dbReference type="InterPro" id="IPR036457">
    <property type="entry name" value="PPM-type-like_dom_sf"/>
</dbReference>
<dbReference type="InterPro" id="IPR001932">
    <property type="entry name" value="PPM-type_phosphatase-like_dom"/>
</dbReference>
<dbReference type="PANTHER" id="PTHR13832:SF627">
    <property type="entry name" value="[PYRUVATE DEHYDROGENASE [ACETYL-TRANSFERRING]]-PHOSPHATASE 1, MITOCHONDRIAL"/>
    <property type="match status" value="1"/>
</dbReference>
<dbReference type="PANTHER" id="PTHR13832">
    <property type="entry name" value="PROTEIN PHOSPHATASE 2C"/>
    <property type="match status" value="1"/>
</dbReference>
<dbReference type="Pfam" id="PF00481">
    <property type="entry name" value="PP2C"/>
    <property type="match status" value="1"/>
</dbReference>
<dbReference type="SMART" id="SM00332">
    <property type="entry name" value="PP2Cc"/>
    <property type="match status" value="1"/>
</dbReference>
<dbReference type="SUPFAM" id="SSF81606">
    <property type="entry name" value="PP2C-like"/>
    <property type="match status" value="1"/>
</dbReference>
<dbReference type="PROSITE" id="PS01032">
    <property type="entry name" value="PPM_1"/>
    <property type="match status" value="1"/>
</dbReference>
<dbReference type="PROSITE" id="PS51746">
    <property type="entry name" value="PPM_2"/>
    <property type="match status" value="1"/>
</dbReference>
<accession>Q5RA52</accession>
<accession>Q5R471</accession>
<accession>Q5R4P7</accession>
<accession>Q5R968</accession>
<comment type="function">
    <text evidence="2">Mitochondrial enzyme that catalyzes the dephosphorylation and concomitant reactivation of the alpha subunit of the E1 component of the pyruvate dehydrogenase complex (PDC), thereby stimulating the conversion of pyruvate into acetyl-CoA.</text>
</comment>
<comment type="catalytic activity">
    <reaction evidence="2">
        <text>O-phospho-L-seryl-[pyruvate dehydrogenase E1 alpha subunit] + H2O = L-seryl-[pyruvate dehydrogenase E1 alpha subunit] + phosphate</text>
        <dbReference type="Rhea" id="RHEA:12669"/>
        <dbReference type="Rhea" id="RHEA-COMP:13689"/>
        <dbReference type="Rhea" id="RHEA-COMP:13690"/>
        <dbReference type="ChEBI" id="CHEBI:15377"/>
        <dbReference type="ChEBI" id="CHEBI:29999"/>
        <dbReference type="ChEBI" id="CHEBI:43474"/>
        <dbReference type="ChEBI" id="CHEBI:83421"/>
        <dbReference type="EC" id="3.1.3.43"/>
    </reaction>
    <physiologicalReaction direction="left-to-right" evidence="2">
        <dbReference type="Rhea" id="RHEA:12670"/>
    </physiologicalReaction>
</comment>
<comment type="cofactor">
    <cofactor evidence="2">
        <name>Mn(2+)</name>
        <dbReference type="ChEBI" id="CHEBI:29035"/>
    </cofactor>
    <cofactor evidence="1">
        <name>Mg(2+)</name>
        <dbReference type="ChEBI" id="CHEBI:18420"/>
    </cofactor>
    <text evidence="1 2">Binds 2 Mn(2+) ions per subunit (By similarity). Binds 2 Mg(2+) ions per subunit (By similarity). Mn(2+) can substitute Mg2(+) for catalytic activity (By similarity).</text>
</comment>
<comment type="activity regulation">
    <text evidence="2 3">Magnesium-dependent and calcium-stimulated (By similarity). PDP1 activity strongly depends on its Ca(2+)-dependent binding to the lipoyl domain of E2 subunit of component of the pyruvate dehydrogenase complex (By similarity).</text>
</comment>
<comment type="subunit">
    <text evidence="2">Heterodimer of a catalytic (PDP1) and a regulatory (PDPR) subunit.</text>
</comment>
<comment type="subcellular location">
    <subcellularLocation>
        <location evidence="2">Mitochondrion</location>
    </subcellularLocation>
</comment>
<comment type="similarity">
    <text evidence="5">Belongs to the PP2C family.</text>
</comment>
<comment type="sequence caution" evidence="5">
    <conflict type="erroneous initiation">
        <sequence resource="EMBL-CDS" id="CAH93269"/>
    </conflict>
</comment>
<comment type="sequence caution" evidence="5">
    <conflict type="erroneous termination">
        <sequence resource="EMBL-CDS" id="CAH93445"/>
    </conflict>
    <text>Truncated C-terminus.</text>
</comment>
<reference key="1">
    <citation type="submission" date="2004-11" db="EMBL/GenBank/DDBJ databases">
        <authorList>
            <consortium name="The German cDNA consortium"/>
        </authorList>
    </citation>
    <scope>NUCLEOTIDE SEQUENCE [LARGE SCALE MRNA]</scope>
    <source>
        <tissue>Brain cortex</tissue>
    </source>
</reference>
<organism>
    <name type="scientific">Pongo abelii</name>
    <name type="common">Sumatran orangutan</name>
    <name type="synonym">Pongo pygmaeus abelii</name>
    <dbReference type="NCBI Taxonomy" id="9601"/>
    <lineage>
        <taxon>Eukaryota</taxon>
        <taxon>Metazoa</taxon>
        <taxon>Chordata</taxon>
        <taxon>Craniata</taxon>
        <taxon>Vertebrata</taxon>
        <taxon>Euteleostomi</taxon>
        <taxon>Mammalia</taxon>
        <taxon>Eutheria</taxon>
        <taxon>Euarchontoglires</taxon>
        <taxon>Primates</taxon>
        <taxon>Haplorrhini</taxon>
        <taxon>Catarrhini</taxon>
        <taxon>Hominidae</taxon>
        <taxon>Pongo</taxon>
    </lineage>
</organism>
<evidence type="ECO:0000250" key="1">
    <source>
        <dbReference type="UniProtKB" id="O88483"/>
    </source>
</evidence>
<evidence type="ECO:0000250" key="2">
    <source>
        <dbReference type="UniProtKB" id="P35816"/>
    </source>
</evidence>
<evidence type="ECO:0000250" key="3">
    <source>
        <dbReference type="UniProtKB" id="Q9P0J1"/>
    </source>
</evidence>
<evidence type="ECO:0000255" key="4">
    <source>
        <dbReference type="PROSITE-ProRule" id="PRU01082"/>
    </source>
</evidence>
<evidence type="ECO:0000305" key="5"/>
<keyword id="KW-0007">Acetylation</keyword>
<keyword id="KW-0106">Calcium</keyword>
<keyword id="KW-0378">Hydrolase</keyword>
<keyword id="KW-0460">Magnesium</keyword>
<keyword id="KW-0464">Manganese</keyword>
<keyword id="KW-0479">Metal-binding</keyword>
<keyword id="KW-0496">Mitochondrion</keyword>
<keyword id="KW-0904">Protein phosphatase</keyword>
<keyword id="KW-1185">Reference proteome</keyword>
<keyword id="KW-0809">Transit peptide</keyword>
<feature type="transit peptide" description="Mitochondrion" evidence="2">
    <location>
        <begin position="1"/>
        <end position="71"/>
    </location>
</feature>
<feature type="chain" id="PRO_0000341945" description="[Pyruvate dehydrogenase [acetyl-transferring]]-phosphatase 1, mitochondrial">
    <location>
        <begin position="72"/>
        <end position="537"/>
    </location>
</feature>
<feature type="domain" description="PPM-type phosphatase" evidence="4">
    <location>
        <begin position="109"/>
        <end position="525"/>
    </location>
</feature>
<feature type="binding site" evidence="2">
    <location>
        <position position="144"/>
    </location>
    <ligand>
        <name>Mn(2+)</name>
        <dbReference type="ChEBI" id="CHEBI:29035"/>
        <label>1</label>
    </ligand>
</feature>
<feature type="binding site" evidence="2">
    <location>
        <position position="144"/>
    </location>
    <ligand>
        <name>Mn(2+)</name>
        <dbReference type="ChEBI" id="CHEBI:29035"/>
        <label>2</label>
    </ligand>
</feature>
<feature type="binding site" evidence="2">
    <location>
        <position position="145"/>
    </location>
    <ligand>
        <name>Mn(2+)</name>
        <dbReference type="ChEBI" id="CHEBI:29035"/>
        <label>1</label>
    </ligand>
</feature>
<feature type="binding site" evidence="2">
    <location>
        <position position="418"/>
    </location>
    <ligand>
        <name>Mn(2+)</name>
        <dbReference type="ChEBI" id="CHEBI:29035"/>
        <label>2</label>
    </ligand>
</feature>
<feature type="binding site" evidence="2">
    <location>
        <position position="516"/>
    </location>
    <ligand>
        <name>Mn(2+)</name>
        <dbReference type="ChEBI" id="CHEBI:29035"/>
        <label>2</label>
    </ligand>
</feature>
<feature type="modified residue" description="N6-acetyllysine" evidence="3">
    <location>
        <position position="202"/>
    </location>
</feature>
<feature type="sequence conflict" description="In Ref. 1; CAH93445." evidence="5" ref="1">
    <original>E</original>
    <variation>G</variation>
    <location>
        <position position="250"/>
    </location>
</feature>
<feature type="sequence conflict" description="In Ref. 1; CAH91692." evidence="5" ref="1">
    <original>K</original>
    <variation>E</variation>
    <location>
        <position position="502"/>
    </location>
</feature>